<comment type="catalytic activity">
    <reaction evidence="1">
        <text>L-citrulline + L-aspartate + ATP = 2-(N(omega)-L-arginino)succinate + AMP + diphosphate + H(+)</text>
        <dbReference type="Rhea" id="RHEA:10932"/>
        <dbReference type="ChEBI" id="CHEBI:15378"/>
        <dbReference type="ChEBI" id="CHEBI:29991"/>
        <dbReference type="ChEBI" id="CHEBI:30616"/>
        <dbReference type="ChEBI" id="CHEBI:33019"/>
        <dbReference type="ChEBI" id="CHEBI:57472"/>
        <dbReference type="ChEBI" id="CHEBI:57743"/>
        <dbReference type="ChEBI" id="CHEBI:456215"/>
        <dbReference type="EC" id="6.3.4.5"/>
    </reaction>
</comment>
<comment type="pathway">
    <text evidence="1">Amino-acid biosynthesis; L-arginine biosynthesis; L-arginine from L-ornithine and carbamoyl phosphate: step 2/3.</text>
</comment>
<comment type="subunit">
    <text evidence="1">Homotetramer.</text>
</comment>
<comment type="subcellular location">
    <subcellularLocation>
        <location evidence="1">Cytoplasm</location>
    </subcellularLocation>
</comment>
<comment type="similarity">
    <text evidence="1">Belongs to the argininosuccinate synthase family. Type 1 subfamily.</text>
</comment>
<keyword id="KW-0028">Amino-acid biosynthesis</keyword>
<keyword id="KW-0055">Arginine biosynthesis</keyword>
<keyword id="KW-0067">ATP-binding</keyword>
<keyword id="KW-0963">Cytoplasm</keyword>
<keyword id="KW-0436">Ligase</keyword>
<keyword id="KW-0547">Nucleotide-binding</keyword>
<keyword id="KW-1185">Reference proteome</keyword>
<sequence>MSKKVQKVVLAYSGGLDTSIILKWLQTTYGAEVVTFTADLGQGEELEPARRKAQLLGIKDENIFIEDLREEFVRDYVFPMFRANAVYEGQYLLGTSIARPLIAKKQIEIAEKVGADAVAHGATGKGNDQVRFELGYYALKPDITIIAPWREWDLRSREQLIAFAEQHQIPIAKDKRGEAPFSVDANLLHASSEGKVLEDPAQEVPDYVYSRTIDPEAAPDQPTYITIDFEQGDAVAIDGGKMSPATLLAKLNELGRANGIGRLDLVENRFVGMKSRGMYETPGGAILLVAHRGIEQITLDRGAAHLKDELMPKYAELVYNGFWFSPEREMLQAAIDQSQRYVTGQVRLKLYKGNVILVGRDSAYSLYDQDLVTFEEGAVAYDHRDAAGFIKLNALRLRTLGQRRKKLGL</sequence>
<proteinExistence type="inferred from homology"/>
<evidence type="ECO:0000255" key="1">
    <source>
        <dbReference type="HAMAP-Rule" id="MF_00005"/>
    </source>
</evidence>
<gene>
    <name evidence="1" type="primary">argG</name>
    <name type="ordered locus">Nwi_2803</name>
</gene>
<reference key="1">
    <citation type="journal article" date="2006" name="Appl. Environ. Microbiol.">
        <title>Genome sequence of the chemolithoautotrophic nitrite-oxidizing bacterium Nitrobacter winogradskyi Nb-255.</title>
        <authorList>
            <person name="Starkenburg S.R."/>
            <person name="Chain P.S.G."/>
            <person name="Sayavedra-Soto L.A."/>
            <person name="Hauser L."/>
            <person name="Land M.L."/>
            <person name="Larimer F.W."/>
            <person name="Malfatti S.A."/>
            <person name="Klotz M.G."/>
            <person name="Bottomley P.J."/>
            <person name="Arp D.J."/>
            <person name="Hickey W.J."/>
        </authorList>
    </citation>
    <scope>NUCLEOTIDE SEQUENCE [LARGE SCALE GENOMIC DNA]</scope>
    <source>
        <strain>ATCC 25391 / DSM 10237 / CIP 104748 / NCIMB 11846 / Nb-255</strain>
    </source>
</reference>
<protein>
    <recommendedName>
        <fullName evidence="1">Argininosuccinate synthase</fullName>
        <ecNumber evidence="1">6.3.4.5</ecNumber>
    </recommendedName>
    <alternativeName>
        <fullName evidence="1">Citrulline--aspartate ligase</fullName>
    </alternativeName>
</protein>
<dbReference type="EC" id="6.3.4.5" evidence="1"/>
<dbReference type="EMBL" id="CP000115">
    <property type="protein sequence ID" value="ABA06056.1"/>
    <property type="molecule type" value="Genomic_DNA"/>
</dbReference>
<dbReference type="RefSeq" id="WP_011316001.1">
    <property type="nucleotide sequence ID" value="NC_007406.1"/>
</dbReference>
<dbReference type="SMR" id="Q3SNT5"/>
<dbReference type="STRING" id="323098.Nwi_2803"/>
<dbReference type="KEGG" id="nwi:Nwi_2803"/>
<dbReference type="eggNOG" id="COG0137">
    <property type="taxonomic scope" value="Bacteria"/>
</dbReference>
<dbReference type="HOGENOM" id="CLU_032784_4_2_5"/>
<dbReference type="OrthoDB" id="9801641at2"/>
<dbReference type="UniPathway" id="UPA00068">
    <property type="reaction ID" value="UER00113"/>
</dbReference>
<dbReference type="Proteomes" id="UP000002531">
    <property type="component" value="Chromosome"/>
</dbReference>
<dbReference type="GO" id="GO:0005737">
    <property type="term" value="C:cytoplasm"/>
    <property type="evidence" value="ECO:0007669"/>
    <property type="project" value="UniProtKB-SubCell"/>
</dbReference>
<dbReference type="GO" id="GO:0004055">
    <property type="term" value="F:argininosuccinate synthase activity"/>
    <property type="evidence" value="ECO:0007669"/>
    <property type="project" value="UniProtKB-UniRule"/>
</dbReference>
<dbReference type="GO" id="GO:0005524">
    <property type="term" value="F:ATP binding"/>
    <property type="evidence" value="ECO:0007669"/>
    <property type="project" value="UniProtKB-UniRule"/>
</dbReference>
<dbReference type="GO" id="GO:0000053">
    <property type="term" value="P:argininosuccinate metabolic process"/>
    <property type="evidence" value="ECO:0007669"/>
    <property type="project" value="TreeGrafter"/>
</dbReference>
<dbReference type="GO" id="GO:0006526">
    <property type="term" value="P:L-arginine biosynthetic process"/>
    <property type="evidence" value="ECO:0007669"/>
    <property type="project" value="UniProtKB-UniRule"/>
</dbReference>
<dbReference type="GO" id="GO:0000050">
    <property type="term" value="P:urea cycle"/>
    <property type="evidence" value="ECO:0007669"/>
    <property type="project" value="TreeGrafter"/>
</dbReference>
<dbReference type="CDD" id="cd01999">
    <property type="entry name" value="ASS"/>
    <property type="match status" value="1"/>
</dbReference>
<dbReference type="FunFam" id="3.40.50.620:FF:000019">
    <property type="entry name" value="Argininosuccinate synthase"/>
    <property type="match status" value="1"/>
</dbReference>
<dbReference type="FunFam" id="3.90.1260.10:FF:000007">
    <property type="entry name" value="Argininosuccinate synthase"/>
    <property type="match status" value="1"/>
</dbReference>
<dbReference type="Gene3D" id="3.90.1260.10">
    <property type="entry name" value="Argininosuccinate synthetase, chain A, domain 2"/>
    <property type="match status" value="1"/>
</dbReference>
<dbReference type="Gene3D" id="3.40.50.620">
    <property type="entry name" value="HUPs"/>
    <property type="match status" value="1"/>
</dbReference>
<dbReference type="Gene3D" id="1.20.5.470">
    <property type="entry name" value="Single helix bin"/>
    <property type="match status" value="1"/>
</dbReference>
<dbReference type="HAMAP" id="MF_00005">
    <property type="entry name" value="Arg_succ_synth_type1"/>
    <property type="match status" value="1"/>
</dbReference>
<dbReference type="InterPro" id="IPR048268">
    <property type="entry name" value="Arginosuc_syn_C"/>
</dbReference>
<dbReference type="InterPro" id="IPR048267">
    <property type="entry name" value="Arginosuc_syn_N"/>
</dbReference>
<dbReference type="InterPro" id="IPR001518">
    <property type="entry name" value="Arginosuc_synth"/>
</dbReference>
<dbReference type="InterPro" id="IPR018223">
    <property type="entry name" value="Arginosuc_synth_CS"/>
</dbReference>
<dbReference type="InterPro" id="IPR023434">
    <property type="entry name" value="Arginosuc_synth_type_1_subfam"/>
</dbReference>
<dbReference type="InterPro" id="IPR024074">
    <property type="entry name" value="AS_cat/multimer_dom_body"/>
</dbReference>
<dbReference type="InterPro" id="IPR014729">
    <property type="entry name" value="Rossmann-like_a/b/a_fold"/>
</dbReference>
<dbReference type="NCBIfam" id="TIGR00032">
    <property type="entry name" value="argG"/>
    <property type="match status" value="1"/>
</dbReference>
<dbReference type="NCBIfam" id="NF001770">
    <property type="entry name" value="PRK00509.1"/>
    <property type="match status" value="1"/>
</dbReference>
<dbReference type="PANTHER" id="PTHR11587">
    <property type="entry name" value="ARGININOSUCCINATE SYNTHASE"/>
    <property type="match status" value="1"/>
</dbReference>
<dbReference type="PANTHER" id="PTHR11587:SF2">
    <property type="entry name" value="ARGININOSUCCINATE SYNTHASE"/>
    <property type="match status" value="1"/>
</dbReference>
<dbReference type="Pfam" id="PF20979">
    <property type="entry name" value="Arginosuc_syn_C"/>
    <property type="match status" value="1"/>
</dbReference>
<dbReference type="Pfam" id="PF00764">
    <property type="entry name" value="Arginosuc_synth"/>
    <property type="match status" value="1"/>
</dbReference>
<dbReference type="SUPFAM" id="SSF52402">
    <property type="entry name" value="Adenine nucleotide alpha hydrolases-like"/>
    <property type="match status" value="1"/>
</dbReference>
<dbReference type="SUPFAM" id="SSF69864">
    <property type="entry name" value="Argininosuccinate synthetase, C-terminal domain"/>
    <property type="match status" value="1"/>
</dbReference>
<dbReference type="PROSITE" id="PS00564">
    <property type="entry name" value="ARGININOSUCCIN_SYN_1"/>
    <property type="match status" value="1"/>
</dbReference>
<dbReference type="PROSITE" id="PS00565">
    <property type="entry name" value="ARGININOSUCCIN_SYN_2"/>
    <property type="match status" value="1"/>
</dbReference>
<accession>Q3SNT5</accession>
<name>ASSY_NITWN</name>
<organism>
    <name type="scientific">Nitrobacter winogradskyi (strain ATCC 25391 / DSM 10237 / CIP 104748 / NCIMB 11846 / Nb-255)</name>
    <dbReference type="NCBI Taxonomy" id="323098"/>
    <lineage>
        <taxon>Bacteria</taxon>
        <taxon>Pseudomonadati</taxon>
        <taxon>Pseudomonadota</taxon>
        <taxon>Alphaproteobacteria</taxon>
        <taxon>Hyphomicrobiales</taxon>
        <taxon>Nitrobacteraceae</taxon>
        <taxon>Nitrobacter</taxon>
    </lineage>
</organism>
<feature type="chain" id="PRO_0000263943" description="Argininosuccinate synthase">
    <location>
        <begin position="1"/>
        <end position="409"/>
    </location>
</feature>
<feature type="binding site" evidence="1">
    <location>
        <begin position="11"/>
        <end position="19"/>
    </location>
    <ligand>
        <name>ATP</name>
        <dbReference type="ChEBI" id="CHEBI:30616"/>
    </ligand>
</feature>
<feature type="binding site" evidence="1">
    <location>
        <position position="38"/>
    </location>
    <ligand>
        <name>ATP</name>
        <dbReference type="ChEBI" id="CHEBI:30616"/>
    </ligand>
</feature>
<feature type="binding site" evidence="1">
    <location>
        <position position="91"/>
    </location>
    <ligand>
        <name>L-citrulline</name>
        <dbReference type="ChEBI" id="CHEBI:57743"/>
    </ligand>
</feature>
<feature type="binding site" evidence="1">
    <location>
        <position position="96"/>
    </location>
    <ligand>
        <name>L-citrulline</name>
        <dbReference type="ChEBI" id="CHEBI:57743"/>
    </ligand>
</feature>
<feature type="binding site" evidence="1">
    <location>
        <position position="121"/>
    </location>
    <ligand>
        <name>ATP</name>
        <dbReference type="ChEBI" id="CHEBI:30616"/>
    </ligand>
</feature>
<feature type="binding site" evidence="1">
    <location>
        <position position="123"/>
    </location>
    <ligand>
        <name>L-aspartate</name>
        <dbReference type="ChEBI" id="CHEBI:29991"/>
    </ligand>
</feature>
<feature type="binding site" evidence="1">
    <location>
        <position position="127"/>
    </location>
    <ligand>
        <name>L-aspartate</name>
        <dbReference type="ChEBI" id="CHEBI:29991"/>
    </ligand>
</feature>
<feature type="binding site" evidence="1">
    <location>
        <position position="127"/>
    </location>
    <ligand>
        <name>L-citrulline</name>
        <dbReference type="ChEBI" id="CHEBI:57743"/>
    </ligand>
</feature>
<feature type="binding site" evidence="1">
    <location>
        <position position="128"/>
    </location>
    <ligand>
        <name>L-aspartate</name>
        <dbReference type="ChEBI" id="CHEBI:29991"/>
    </ligand>
</feature>
<feature type="binding site" evidence="1">
    <location>
        <position position="131"/>
    </location>
    <ligand>
        <name>L-citrulline</name>
        <dbReference type="ChEBI" id="CHEBI:57743"/>
    </ligand>
</feature>
<feature type="binding site" evidence="1">
    <location>
        <position position="182"/>
    </location>
    <ligand>
        <name>L-citrulline</name>
        <dbReference type="ChEBI" id="CHEBI:57743"/>
    </ligand>
</feature>
<feature type="binding site" evidence="1">
    <location>
        <position position="191"/>
    </location>
    <ligand>
        <name>L-citrulline</name>
        <dbReference type="ChEBI" id="CHEBI:57743"/>
    </ligand>
</feature>
<feature type="binding site" evidence="1">
    <location>
        <position position="267"/>
    </location>
    <ligand>
        <name>L-citrulline</name>
        <dbReference type="ChEBI" id="CHEBI:57743"/>
    </ligand>
</feature>
<feature type="binding site" evidence="1">
    <location>
        <position position="279"/>
    </location>
    <ligand>
        <name>L-citrulline</name>
        <dbReference type="ChEBI" id="CHEBI:57743"/>
    </ligand>
</feature>